<protein>
    <recommendedName>
        <fullName>Protein ALWAYS EARLY 2</fullName>
        <shortName>AtALY2</shortName>
    </recommendedName>
</protein>
<proteinExistence type="evidence at protein level"/>
<evidence type="ECO:0000250" key="1"/>
<evidence type="ECO:0000256" key="2">
    <source>
        <dbReference type="SAM" id="MobiDB-lite"/>
    </source>
</evidence>
<evidence type="ECO:0000269" key="3">
    <source>
    </source>
</evidence>
<evidence type="ECO:0000269" key="4">
    <source>
    </source>
</evidence>
<evidence type="ECO:0000305" key="5"/>
<organism>
    <name type="scientific">Arabidopsis thaliana</name>
    <name type="common">Mouse-ear cress</name>
    <dbReference type="NCBI Taxonomy" id="3702"/>
    <lineage>
        <taxon>Eukaryota</taxon>
        <taxon>Viridiplantae</taxon>
        <taxon>Streptophyta</taxon>
        <taxon>Embryophyta</taxon>
        <taxon>Tracheophyta</taxon>
        <taxon>Spermatophyta</taxon>
        <taxon>Magnoliopsida</taxon>
        <taxon>eudicotyledons</taxon>
        <taxon>Gunneridae</taxon>
        <taxon>Pentapetalae</taxon>
        <taxon>rosids</taxon>
        <taxon>malvids</taxon>
        <taxon>Brassicales</taxon>
        <taxon>Brassicaceae</taxon>
        <taxon>Camelineae</taxon>
        <taxon>Arabidopsis</taxon>
    </lineage>
</organism>
<name>ALY2_ARATH</name>
<comment type="subunit">
    <text evidence="4">Interacts with SNL1 (via PAH3).</text>
</comment>
<comment type="interaction">
    <interactant intactId="EBI-2616358">
        <id>Q6A333</id>
    </interactant>
    <interactant intactId="EBI-2616294">
        <id>Q9SRH9</id>
        <label>SNL1</label>
    </interactant>
    <organismsDiffer>false</organismsDiffer>
    <experiments>2</experiments>
</comment>
<comment type="subcellular location">
    <subcellularLocation>
        <location evidence="1">Nucleus</location>
    </subcellularLocation>
</comment>
<comment type="alternative products">
    <event type="alternative splicing"/>
    <isoform>
        <id>Q6A333-1</id>
        <name>1</name>
        <sequence type="displayed"/>
    </isoform>
    <isoform>
        <id>Q6A333-2</id>
        <name>2</name>
        <sequence type="described" ref="VSP_039131"/>
    </isoform>
    <isoform>
        <id>Q6A333-3</id>
        <name>3</name>
        <sequence type="described" ref="VSP_039132"/>
    </isoform>
</comment>
<comment type="tissue specificity">
    <text evidence="3">Expressed ubiquitously in vegetative and reproductive tissues.</text>
</comment>
<comment type="sequence caution" evidence="5">
    <conflict type="erroneous gene model prediction">
        <sequence resource="EMBL-CDS" id="AAF27044"/>
    </conflict>
</comment>
<comment type="sequence caution" evidence="5">
    <conflict type="erroneous gene model prediction">
        <sequence resource="EMBL-CDS" id="AAF64544"/>
    </conflict>
</comment>
<dbReference type="EMBL" id="AJ583496">
    <property type="protein sequence ID" value="CAE47461.1"/>
    <property type="molecule type" value="mRNA"/>
</dbReference>
<dbReference type="EMBL" id="AC009177">
    <property type="protein sequence ID" value="AAF27044.1"/>
    <property type="status" value="ALT_SEQ"/>
    <property type="molecule type" value="Genomic_DNA"/>
</dbReference>
<dbReference type="EMBL" id="AC009606">
    <property type="protein sequence ID" value="AAF64544.1"/>
    <property type="status" value="ALT_SEQ"/>
    <property type="molecule type" value="Genomic_DNA"/>
</dbReference>
<dbReference type="EMBL" id="CP002686">
    <property type="protein sequence ID" value="AEE74227.1"/>
    <property type="molecule type" value="Genomic_DNA"/>
</dbReference>
<dbReference type="EMBL" id="CP002686">
    <property type="protein sequence ID" value="AEE74228.1"/>
    <property type="molecule type" value="Genomic_DNA"/>
</dbReference>
<dbReference type="EMBL" id="CP002686">
    <property type="protein sequence ID" value="AEE74229.1"/>
    <property type="molecule type" value="Genomic_DNA"/>
</dbReference>
<dbReference type="EMBL" id="CP002686">
    <property type="protein sequence ID" value="AEE74230.1"/>
    <property type="molecule type" value="Genomic_DNA"/>
</dbReference>
<dbReference type="EMBL" id="CP002686">
    <property type="protein sequence ID" value="AEE74231.1"/>
    <property type="molecule type" value="Genomic_DNA"/>
</dbReference>
<dbReference type="EMBL" id="AY080604">
    <property type="protein sequence ID" value="AAL86288.1"/>
    <property type="molecule type" value="mRNA"/>
</dbReference>
<dbReference type="RefSeq" id="NP_001030643.1">
    <molecule id="Q6A333-2"/>
    <property type="nucleotide sequence ID" value="NM_001035566.2"/>
</dbReference>
<dbReference type="RefSeq" id="NP_001118580.1">
    <molecule id="Q6A333-3"/>
    <property type="nucleotide sequence ID" value="NM_001125108.2"/>
</dbReference>
<dbReference type="RefSeq" id="NP_001189812.1">
    <molecule id="Q6A333-2"/>
    <property type="nucleotide sequence ID" value="NM_001202883.1"/>
</dbReference>
<dbReference type="RefSeq" id="NP_001189813.1">
    <molecule id="Q6A333-2"/>
    <property type="nucleotide sequence ID" value="NM_001202884.1"/>
</dbReference>
<dbReference type="RefSeq" id="NP_187189.2">
    <molecule id="Q6A333-1"/>
    <property type="nucleotide sequence ID" value="NM_111411.5"/>
</dbReference>
<dbReference type="SMR" id="Q6A333"/>
<dbReference type="BioGRID" id="5037">
    <property type="interactions" value="4"/>
</dbReference>
<dbReference type="FunCoup" id="Q6A333">
    <property type="interactions" value="369"/>
</dbReference>
<dbReference type="IntAct" id="Q6A333">
    <property type="interactions" value="3"/>
</dbReference>
<dbReference type="STRING" id="3702.Q6A333"/>
<dbReference type="iPTMnet" id="Q6A333"/>
<dbReference type="PaxDb" id="3702-AT3G05380.5"/>
<dbReference type="ProteomicsDB" id="245001">
    <molecule id="Q6A333-1"/>
</dbReference>
<dbReference type="EnsemblPlants" id="AT3G05380.1">
    <molecule id="Q6A333-1"/>
    <property type="protein sequence ID" value="AT3G05380.1"/>
    <property type="gene ID" value="AT3G05380"/>
</dbReference>
<dbReference type="EnsemblPlants" id="AT3G05380.2">
    <molecule id="Q6A333-2"/>
    <property type="protein sequence ID" value="AT3G05380.2"/>
    <property type="gene ID" value="AT3G05380"/>
</dbReference>
<dbReference type="EnsemblPlants" id="AT3G05380.3">
    <molecule id="Q6A333-3"/>
    <property type="protein sequence ID" value="AT3G05380.3"/>
    <property type="gene ID" value="AT3G05380"/>
</dbReference>
<dbReference type="EnsemblPlants" id="AT3G05380.4">
    <molecule id="Q6A333-2"/>
    <property type="protein sequence ID" value="AT3G05380.4"/>
    <property type="gene ID" value="AT3G05380"/>
</dbReference>
<dbReference type="EnsemblPlants" id="AT3G05380.5">
    <molecule id="Q6A333-2"/>
    <property type="protein sequence ID" value="AT3G05380.5"/>
    <property type="gene ID" value="AT3G05380"/>
</dbReference>
<dbReference type="GeneID" id="819702"/>
<dbReference type="Gramene" id="AT3G05380.1">
    <molecule id="Q6A333-1"/>
    <property type="protein sequence ID" value="AT3G05380.1"/>
    <property type="gene ID" value="AT3G05380"/>
</dbReference>
<dbReference type="Gramene" id="AT3G05380.2">
    <molecule id="Q6A333-2"/>
    <property type="protein sequence ID" value="AT3G05380.2"/>
    <property type="gene ID" value="AT3G05380"/>
</dbReference>
<dbReference type="Gramene" id="AT3G05380.3">
    <molecule id="Q6A333-3"/>
    <property type="protein sequence ID" value="AT3G05380.3"/>
    <property type="gene ID" value="AT3G05380"/>
</dbReference>
<dbReference type="Gramene" id="AT3G05380.4">
    <molecule id="Q6A333-2"/>
    <property type="protein sequence ID" value="AT3G05380.4"/>
    <property type="gene ID" value="AT3G05380"/>
</dbReference>
<dbReference type="Gramene" id="AT3G05380.5">
    <molecule id="Q6A333-2"/>
    <property type="protein sequence ID" value="AT3G05380.5"/>
    <property type="gene ID" value="AT3G05380"/>
</dbReference>
<dbReference type="KEGG" id="ath:AT3G05380"/>
<dbReference type="Araport" id="AT3G05380"/>
<dbReference type="TAIR" id="AT3G05380">
    <property type="gene designation" value="ALY2"/>
</dbReference>
<dbReference type="eggNOG" id="KOG1019">
    <property type="taxonomic scope" value="Eukaryota"/>
</dbReference>
<dbReference type="InParanoid" id="Q6A333"/>
<dbReference type="OMA" id="FAKRELM"/>
<dbReference type="PhylomeDB" id="Q6A333"/>
<dbReference type="PRO" id="PR:Q6A333"/>
<dbReference type="Proteomes" id="UP000006548">
    <property type="component" value="Chromosome 3"/>
</dbReference>
<dbReference type="ExpressionAtlas" id="Q6A333">
    <property type="expression patterns" value="baseline and differential"/>
</dbReference>
<dbReference type="GO" id="GO:0070176">
    <property type="term" value="C:DRM complex"/>
    <property type="evidence" value="ECO:0000314"/>
    <property type="project" value="TAIR"/>
</dbReference>
<dbReference type="GO" id="GO:0006351">
    <property type="term" value="P:DNA-templated transcription"/>
    <property type="evidence" value="ECO:0007669"/>
    <property type="project" value="InterPro"/>
</dbReference>
<dbReference type="Gene3D" id="1.20.58.1880">
    <property type="match status" value="1"/>
</dbReference>
<dbReference type="InterPro" id="IPR033471">
    <property type="entry name" value="DIRP"/>
</dbReference>
<dbReference type="InterPro" id="IPR009057">
    <property type="entry name" value="Homeodomain-like_sf"/>
</dbReference>
<dbReference type="InterPro" id="IPR010561">
    <property type="entry name" value="LIN-9/ALY1"/>
</dbReference>
<dbReference type="InterPro" id="IPR002999">
    <property type="entry name" value="Tudor"/>
</dbReference>
<dbReference type="PANTHER" id="PTHR21689">
    <property type="entry name" value="LIN-9"/>
    <property type="match status" value="1"/>
</dbReference>
<dbReference type="PANTHER" id="PTHR21689:SF5">
    <property type="entry name" value="PROTEIN ALWAYS EARLY 1-RELATED"/>
    <property type="match status" value="1"/>
</dbReference>
<dbReference type="Pfam" id="PF06584">
    <property type="entry name" value="DIRP"/>
    <property type="match status" value="1"/>
</dbReference>
<dbReference type="SMART" id="SM01135">
    <property type="entry name" value="DIRP"/>
    <property type="match status" value="1"/>
</dbReference>
<dbReference type="SMART" id="SM00333">
    <property type="entry name" value="TUDOR"/>
    <property type="match status" value="1"/>
</dbReference>
<dbReference type="SUPFAM" id="SSF46689">
    <property type="entry name" value="Homeodomain-like"/>
    <property type="match status" value="1"/>
</dbReference>
<sequence length="1051" mass="117780">MAPVRKSRSVNKRFTNETSPRKDAGKSKKNKLRKKLSDKLGPQWTRLELERFYDAYRKHGQEWRRVAAAIRNSRSVDMVEALFNMNRAYLSLPEGTASVAGLIAMMTDHYSVMEGSGSEGEGHDASEVPRKQQKRKRAKPQRSDSPEEVDIQQSIGSPDGCLTFLKQARANGTQRHATGKRTPRVPVQTSFMRDDREGSTPPNKRARKQFDANDDVAHFLALALTDASRRGGSPKVSESPNRRTELSDSSPIKSWGKMSRTRKSQSKHCGSSIFEEWMESSRERKLDSDKDTTLLMDMERAGEMEAPRKGKRVYKKRVKVEEAECNDSDDNGEACSATQGLRSKSQRRKAAIEASREKYSPRSPKKRDDKHTSGAFDALQALAELSASMLPANLMESELSAQLKEERTEYDMDEKSSTPEATSTSSHGEKANVEPDDSLLHAISSVENANKRKSKPSRLVSTDCDDVPTGKLQPQTSGSLRKRKPKVLGDEAPAEFSQNKSINKKELPQDENNMKSLVKTKRAGQVPAQSKQMKTVKALEESAITSDKKRPGMDIVASPKQVSDSGPTSLSQKPPNRRKKSLQKSLQEKAKSSETTHKAARSSRSLSEQELLLKDKLATSLSFPFARRRCIFEWFYSAIDHPWFSKMEFVDYLNHVGLGHIPRLTRLEWSVIKSSLGRPRRFSERFLHEEREKLKQYRESVRKHYTELRTGAREGLPTDLARPLAVGNRVIAIHPKTREIHDGKILTVDHNKCNVLFDDLGVELVMDIDCMPLNPLEYMPEGLRRQIDKCLSMKKEAQLSGNTNLGVSVLFPPCGLENVSFSMNPPLNQGDMIAPILHGKVSSNTSSPRQTNHSYITTYNKAKEAEIQRAQALQHALDEKEMEPEMLEIVKGSKTRAQAMVDAAIKAASSVKEGEDVNTMIQEALELVGKNQLLRSSMVKHHEHVNGSIEHHHNPSPSNGSEPVANNDLNSQDGSEKNAQMPSELITSCVATWLMIQMCTERQYPPADVAQLIDAAVTSLQPRCPQNLPIYREIQTCMGRIKTQIMSLVPT</sequence>
<keyword id="KW-0025">Alternative splicing</keyword>
<keyword id="KW-0539">Nucleus</keyword>
<keyword id="KW-1185">Reference proteome</keyword>
<accession>Q6A333</accession>
<accession>Q8RXZ0</accession>
<accession>Q9MA51</accession>
<accession>Q9MA81</accession>
<feature type="chain" id="PRO_0000394046" description="Protein ALWAYS EARLY 2">
    <location>
        <begin position="1"/>
        <end position="1051"/>
    </location>
</feature>
<feature type="domain" description="SANT">
    <location>
        <begin position="39"/>
        <end position="93"/>
    </location>
</feature>
<feature type="region of interest" description="Disordered" evidence="2">
    <location>
        <begin position="1"/>
        <end position="37"/>
    </location>
</feature>
<feature type="region of interest" description="Disordered" evidence="2">
    <location>
        <begin position="114"/>
        <end position="158"/>
    </location>
</feature>
<feature type="region of interest" description="Disordered" evidence="2">
    <location>
        <begin position="170"/>
        <end position="210"/>
    </location>
</feature>
<feature type="region of interest" description="Disordered" evidence="2">
    <location>
        <begin position="225"/>
        <end position="293"/>
    </location>
</feature>
<feature type="region of interest" description="Disordered" evidence="2">
    <location>
        <begin position="323"/>
        <end position="375"/>
    </location>
</feature>
<feature type="region of interest" description="Disordered" evidence="2">
    <location>
        <begin position="397"/>
        <end position="605"/>
    </location>
</feature>
<feature type="region of interest" description="Disordered" evidence="2">
    <location>
        <begin position="948"/>
        <end position="981"/>
    </location>
</feature>
<feature type="compositionally biased region" description="Basic residues" evidence="2">
    <location>
        <begin position="1"/>
        <end position="11"/>
    </location>
</feature>
<feature type="compositionally biased region" description="Basic residues" evidence="2">
    <location>
        <begin position="27"/>
        <end position="36"/>
    </location>
</feature>
<feature type="compositionally biased region" description="Basic and acidic residues" evidence="2">
    <location>
        <begin position="120"/>
        <end position="130"/>
    </location>
</feature>
<feature type="compositionally biased region" description="Basic residues" evidence="2">
    <location>
        <begin position="131"/>
        <end position="140"/>
    </location>
</feature>
<feature type="compositionally biased region" description="Basic and acidic residues" evidence="2">
    <location>
        <begin position="279"/>
        <end position="293"/>
    </location>
</feature>
<feature type="compositionally biased region" description="Acidic residues" evidence="2">
    <location>
        <begin position="323"/>
        <end position="332"/>
    </location>
</feature>
<feature type="compositionally biased region" description="Basic and acidic residues" evidence="2">
    <location>
        <begin position="350"/>
        <end position="372"/>
    </location>
</feature>
<feature type="compositionally biased region" description="Basic and acidic residues" evidence="2">
    <location>
        <begin position="403"/>
        <end position="417"/>
    </location>
</feature>
<feature type="compositionally biased region" description="Polar residues" evidence="2">
    <location>
        <begin position="560"/>
        <end position="574"/>
    </location>
</feature>
<feature type="compositionally biased region" description="Basic and acidic residues" evidence="2">
    <location>
        <begin position="586"/>
        <end position="597"/>
    </location>
</feature>
<feature type="compositionally biased region" description="Polar residues" evidence="2">
    <location>
        <begin position="967"/>
        <end position="981"/>
    </location>
</feature>
<feature type="splice variant" id="VSP_039132" description="In isoform 3." evidence="5">
    <location>
        <begin position="1"/>
        <end position="77"/>
    </location>
</feature>
<feature type="splice variant" id="VSP_039131" description="In isoform 2." evidence="5">
    <original>R</original>
    <variation>RK</variation>
    <location>
        <position position="33"/>
    </location>
</feature>
<reference key="1">
    <citation type="journal article" date="2004" name="Gene">
        <title>Gene structure and molecular analysis of Arabidopsis thaliana ALWAYS EARLY homologs.</title>
        <authorList>
            <person name="Bhatt A.M."/>
            <person name="Zhang Q."/>
            <person name="Harris S.A."/>
            <person name="White-Cooper H."/>
            <person name="Dickinson H."/>
        </authorList>
    </citation>
    <scope>NUCLEOTIDE SEQUENCE [MRNA] (ISOFORM 1)</scope>
    <scope>TISSUE SPECIFICITY</scope>
</reference>
<reference key="2">
    <citation type="journal article" date="2000" name="Nature">
        <title>Sequence and analysis of chromosome 3 of the plant Arabidopsis thaliana.</title>
        <authorList>
            <person name="Salanoubat M."/>
            <person name="Lemcke K."/>
            <person name="Rieger M."/>
            <person name="Ansorge W."/>
            <person name="Unseld M."/>
            <person name="Fartmann B."/>
            <person name="Valle G."/>
            <person name="Bloecker H."/>
            <person name="Perez-Alonso M."/>
            <person name="Obermaier B."/>
            <person name="Delseny M."/>
            <person name="Boutry M."/>
            <person name="Grivell L.A."/>
            <person name="Mache R."/>
            <person name="Puigdomenech P."/>
            <person name="De Simone V."/>
            <person name="Choisne N."/>
            <person name="Artiguenave F."/>
            <person name="Robert C."/>
            <person name="Brottier P."/>
            <person name="Wincker P."/>
            <person name="Cattolico L."/>
            <person name="Weissenbach J."/>
            <person name="Saurin W."/>
            <person name="Quetier F."/>
            <person name="Schaefer M."/>
            <person name="Mueller-Auer S."/>
            <person name="Gabel C."/>
            <person name="Fuchs M."/>
            <person name="Benes V."/>
            <person name="Wurmbach E."/>
            <person name="Drzonek H."/>
            <person name="Erfle H."/>
            <person name="Jordan N."/>
            <person name="Bangert S."/>
            <person name="Wiedelmann R."/>
            <person name="Kranz H."/>
            <person name="Voss H."/>
            <person name="Holland R."/>
            <person name="Brandt P."/>
            <person name="Nyakatura G."/>
            <person name="Vezzi A."/>
            <person name="D'Angelo M."/>
            <person name="Pallavicini A."/>
            <person name="Toppo S."/>
            <person name="Simionati B."/>
            <person name="Conrad A."/>
            <person name="Hornischer K."/>
            <person name="Kauer G."/>
            <person name="Loehnert T.-H."/>
            <person name="Nordsiek G."/>
            <person name="Reichelt J."/>
            <person name="Scharfe M."/>
            <person name="Schoen O."/>
            <person name="Bargues M."/>
            <person name="Terol J."/>
            <person name="Climent J."/>
            <person name="Navarro P."/>
            <person name="Collado C."/>
            <person name="Perez-Perez A."/>
            <person name="Ottenwaelder B."/>
            <person name="Duchemin D."/>
            <person name="Cooke R."/>
            <person name="Laudie M."/>
            <person name="Berger-Llauro C."/>
            <person name="Purnelle B."/>
            <person name="Masuy D."/>
            <person name="de Haan M."/>
            <person name="Maarse A.C."/>
            <person name="Alcaraz J.-P."/>
            <person name="Cottet A."/>
            <person name="Casacuberta E."/>
            <person name="Monfort A."/>
            <person name="Argiriou A."/>
            <person name="Flores M."/>
            <person name="Liguori R."/>
            <person name="Vitale D."/>
            <person name="Mannhaupt G."/>
            <person name="Haase D."/>
            <person name="Schoof H."/>
            <person name="Rudd S."/>
            <person name="Zaccaria P."/>
            <person name="Mewes H.-W."/>
            <person name="Mayer K.F.X."/>
            <person name="Kaul S."/>
            <person name="Town C.D."/>
            <person name="Koo H.L."/>
            <person name="Tallon L.J."/>
            <person name="Jenkins J."/>
            <person name="Rooney T."/>
            <person name="Rizzo M."/>
            <person name="Walts A."/>
            <person name="Utterback T."/>
            <person name="Fujii C.Y."/>
            <person name="Shea T.P."/>
            <person name="Creasy T.H."/>
            <person name="Haas B."/>
            <person name="Maiti R."/>
            <person name="Wu D."/>
            <person name="Peterson J."/>
            <person name="Van Aken S."/>
            <person name="Pai G."/>
            <person name="Militscher J."/>
            <person name="Sellers P."/>
            <person name="Gill J.E."/>
            <person name="Feldblyum T.V."/>
            <person name="Preuss D."/>
            <person name="Lin X."/>
            <person name="Nierman W.C."/>
            <person name="Salzberg S.L."/>
            <person name="White O."/>
            <person name="Venter J.C."/>
            <person name="Fraser C.M."/>
            <person name="Kaneko T."/>
            <person name="Nakamura Y."/>
            <person name="Sato S."/>
            <person name="Kato T."/>
            <person name="Asamizu E."/>
            <person name="Sasamoto S."/>
            <person name="Kimura T."/>
            <person name="Idesawa K."/>
            <person name="Kawashima K."/>
            <person name="Kishida Y."/>
            <person name="Kiyokawa C."/>
            <person name="Kohara M."/>
            <person name="Matsumoto M."/>
            <person name="Matsuno A."/>
            <person name="Muraki A."/>
            <person name="Nakayama S."/>
            <person name="Nakazaki N."/>
            <person name="Shinpo S."/>
            <person name="Takeuchi C."/>
            <person name="Wada T."/>
            <person name="Watanabe A."/>
            <person name="Yamada M."/>
            <person name="Yasuda M."/>
            <person name="Tabata S."/>
        </authorList>
    </citation>
    <scope>NUCLEOTIDE SEQUENCE [LARGE SCALE GENOMIC DNA]</scope>
    <source>
        <strain>cv. Columbia</strain>
    </source>
</reference>
<reference key="3">
    <citation type="journal article" date="2017" name="Plant J.">
        <title>Araport11: a complete reannotation of the Arabidopsis thaliana reference genome.</title>
        <authorList>
            <person name="Cheng C.Y."/>
            <person name="Krishnakumar V."/>
            <person name="Chan A.P."/>
            <person name="Thibaud-Nissen F."/>
            <person name="Schobel S."/>
            <person name="Town C.D."/>
        </authorList>
    </citation>
    <scope>GENOME REANNOTATION</scope>
    <source>
        <strain>cv. Columbia</strain>
    </source>
</reference>
<reference key="4">
    <citation type="journal article" date="2003" name="Science">
        <title>Empirical analysis of transcriptional activity in the Arabidopsis genome.</title>
        <authorList>
            <person name="Yamada K."/>
            <person name="Lim J."/>
            <person name="Dale J.M."/>
            <person name="Chen H."/>
            <person name="Shinn P."/>
            <person name="Palm C.J."/>
            <person name="Southwick A.M."/>
            <person name="Wu H.C."/>
            <person name="Kim C.J."/>
            <person name="Nguyen M."/>
            <person name="Pham P.K."/>
            <person name="Cheuk R.F."/>
            <person name="Karlin-Newmann G."/>
            <person name="Liu S.X."/>
            <person name="Lam B."/>
            <person name="Sakano H."/>
            <person name="Wu T."/>
            <person name="Yu G."/>
            <person name="Miranda M."/>
            <person name="Quach H.L."/>
            <person name="Tripp M."/>
            <person name="Chang C.H."/>
            <person name="Lee J.M."/>
            <person name="Toriumi M.J."/>
            <person name="Chan M.M."/>
            <person name="Tang C.C."/>
            <person name="Onodera C.S."/>
            <person name="Deng J.M."/>
            <person name="Akiyama K."/>
            <person name="Ansari Y."/>
            <person name="Arakawa T."/>
            <person name="Banh J."/>
            <person name="Banno F."/>
            <person name="Bowser L."/>
            <person name="Brooks S.Y."/>
            <person name="Carninci P."/>
            <person name="Chao Q."/>
            <person name="Choy N."/>
            <person name="Enju A."/>
            <person name="Goldsmith A.D."/>
            <person name="Gurjal M."/>
            <person name="Hansen N.F."/>
            <person name="Hayashizaki Y."/>
            <person name="Johnson-Hopson C."/>
            <person name="Hsuan V.W."/>
            <person name="Iida K."/>
            <person name="Karnes M."/>
            <person name="Khan S."/>
            <person name="Koesema E."/>
            <person name="Ishida J."/>
            <person name="Jiang P.X."/>
            <person name="Jones T."/>
            <person name="Kawai J."/>
            <person name="Kamiya A."/>
            <person name="Meyers C."/>
            <person name="Nakajima M."/>
            <person name="Narusaka M."/>
            <person name="Seki M."/>
            <person name="Sakurai T."/>
            <person name="Satou M."/>
            <person name="Tamse R."/>
            <person name="Vaysberg M."/>
            <person name="Wallender E.K."/>
            <person name="Wong C."/>
            <person name="Yamamura Y."/>
            <person name="Yuan S."/>
            <person name="Shinozaki K."/>
            <person name="Davis R.W."/>
            <person name="Theologis A."/>
            <person name="Ecker J.R."/>
        </authorList>
    </citation>
    <scope>NUCLEOTIDE SEQUENCE [LARGE SCALE MRNA] OF 232-1051</scope>
    <source>
        <strain>cv. Columbia</strain>
    </source>
</reference>
<reference key="5">
    <citation type="journal article" date="2010" name="J. Mol. Biol.">
        <title>PAH-domain-specific interactions of the Arabidopsis transcription coregulator SIN3-LIKE1 (SNL1) with telomere-binding protein 1 and ALWAYS EARLY2 Myb-DNA binding factors.</title>
        <authorList>
            <person name="Bowen A.J."/>
            <person name="Gonzalez D."/>
            <person name="Mullins J.G."/>
            <person name="Bhatt A.M."/>
            <person name="Martinez A."/>
            <person name="Conlan R.S."/>
        </authorList>
    </citation>
    <scope>INTERACTION WITH SNL1</scope>
</reference>
<gene>
    <name type="primary">ALY2</name>
    <name type="ordered locus">At3g05380</name>
    <name type="ORF">F22F7.18</name>
    <name type="ORF">T12H1.35</name>
</gene>